<dbReference type="EMBL" id="CP000248">
    <property type="protein sequence ID" value="ABD25708.1"/>
    <property type="molecule type" value="Genomic_DNA"/>
</dbReference>
<dbReference type="RefSeq" id="WP_011444922.1">
    <property type="nucleotide sequence ID" value="NC_007794.1"/>
</dbReference>
<dbReference type="SMR" id="Q2G8W5"/>
<dbReference type="STRING" id="279238.Saro_1264"/>
<dbReference type="KEGG" id="nar:Saro_1264"/>
<dbReference type="eggNOG" id="COG0097">
    <property type="taxonomic scope" value="Bacteria"/>
</dbReference>
<dbReference type="HOGENOM" id="CLU_065464_1_2_5"/>
<dbReference type="Proteomes" id="UP000009134">
    <property type="component" value="Chromosome"/>
</dbReference>
<dbReference type="GO" id="GO:0022625">
    <property type="term" value="C:cytosolic large ribosomal subunit"/>
    <property type="evidence" value="ECO:0007669"/>
    <property type="project" value="TreeGrafter"/>
</dbReference>
<dbReference type="GO" id="GO:0019843">
    <property type="term" value="F:rRNA binding"/>
    <property type="evidence" value="ECO:0007669"/>
    <property type="project" value="UniProtKB-UniRule"/>
</dbReference>
<dbReference type="GO" id="GO:0003735">
    <property type="term" value="F:structural constituent of ribosome"/>
    <property type="evidence" value="ECO:0007669"/>
    <property type="project" value="InterPro"/>
</dbReference>
<dbReference type="GO" id="GO:0002181">
    <property type="term" value="P:cytoplasmic translation"/>
    <property type="evidence" value="ECO:0007669"/>
    <property type="project" value="TreeGrafter"/>
</dbReference>
<dbReference type="FunFam" id="3.90.930.12:FF:000001">
    <property type="entry name" value="50S ribosomal protein L6"/>
    <property type="match status" value="1"/>
</dbReference>
<dbReference type="FunFam" id="3.90.930.12:FF:000002">
    <property type="entry name" value="50S ribosomal protein L6"/>
    <property type="match status" value="1"/>
</dbReference>
<dbReference type="Gene3D" id="3.90.930.12">
    <property type="entry name" value="Ribosomal protein L6, alpha-beta domain"/>
    <property type="match status" value="2"/>
</dbReference>
<dbReference type="HAMAP" id="MF_01365_B">
    <property type="entry name" value="Ribosomal_uL6_B"/>
    <property type="match status" value="1"/>
</dbReference>
<dbReference type="InterPro" id="IPR000702">
    <property type="entry name" value="Ribosomal_uL6-like"/>
</dbReference>
<dbReference type="InterPro" id="IPR036789">
    <property type="entry name" value="Ribosomal_uL6-like_a/b-dom_sf"/>
</dbReference>
<dbReference type="InterPro" id="IPR020040">
    <property type="entry name" value="Ribosomal_uL6_a/b-dom"/>
</dbReference>
<dbReference type="InterPro" id="IPR019906">
    <property type="entry name" value="Ribosomal_uL6_bac-type"/>
</dbReference>
<dbReference type="InterPro" id="IPR002358">
    <property type="entry name" value="Ribosomal_uL6_CS"/>
</dbReference>
<dbReference type="NCBIfam" id="TIGR03654">
    <property type="entry name" value="L6_bact"/>
    <property type="match status" value="1"/>
</dbReference>
<dbReference type="PANTHER" id="PTHR11655">
    <property type="entry name" value="60S/50S RIBOSOMAL PROTEIN L6/L9"/>
    <property type="match status" value="1"/>
</dbReference>
<dbReference type="PANTHER" id="PTHR11655:SF14">
    <property type="entry name" value="LARGE RIBOSOMAL SUBUNIT PROTEIN UL6M"/>
    <property type="match status" value="1"/>
</dbReference>
<dbReference type="Pfam" id="PF00347">
    <property type="entry name" value="Ribosomal_L6"/>
    <property type="match status" value="2"/>
</dbReference>
<dbReference type="PIRSF" id="PIRSF002162">
    <property type="entry name" value="Ribosomal_L6"/>
    <property type="match status" value="1"/>
</dbReference>
<dbReference type="PRINTS" id="PR00059">
    <property type="entry name" value="RIBOSOMALL6"/>
</dbReference>
<dbReference type="SUPFAM" id="SSF56053">
    <property type="entry name" value="Ribosomal protein L6"/>
    <property type="match status" value="2"/>
</dbReference>
<dbReference type="PROSITE" id="PS00525">
    <property type="entry name" value="RIBOSOMAL_L6_1"/>
    <property type="match status" value="1"/>
</dbReference>
<accession>Q2G8W5</accession>
<gene>
    <name evidence="1" type="primary">rplF</name>
    <name type="ordered locus">Saro_1264</name>
</gene>
<name>RL6_NOVAD</name>
<keyword id="KW-1185">Reference proteome</keyword>
<keyword id="KW-0687">Ribonucleoprotein</keyword>
<keyword id="KW-0689">Ribosomal protein</keyword>
<keyword id="KW-0694">RNA-binding</keyword>
<keyword id="KW-0699">rRNA-binding</keyword>
<reference key="1">
    <citation type="submission" date="2006-01" db="EMBL/GenBank/DDBJ databases">
        <title>Complete sequence of Novosphingobium aromaticivorans DSM 12444.</title>
        <authorList>
            <consortium name="US DOE Joint Genome Institute"/>
            <person name="Copeland A."/>
            <person name="Lucas S."/>
            <person name="Lapidus A."/>
            <person name="Barry K."/>
            <person name="Detter J.C."/>
            <person name="Glavina T."/>
            <person name="Hammon N."/>
            <person name="Israni S."/>
            <person name="Pitluck S."/>
            <person name="Chain P."/>
            <person name="Malfatti S."/>
            <person name="Shin M."/>
            <person name="Vergez L."/>
            <person name="Schmutz J."/>
            <person name="Larimer F."/>
            <person name="Land M."/>
            <person name="Kyrpides N."/>
            <person name="Ivanova N."/>
            <person name="Fredrickson J."/>
            <person name="Balkwill D."/>
            <person name="Romine M.F."/>
            <person name="Richardson P."/>
        </authorList>
    </citation>
    <scope>NUCLEOTIDE SEQUENCE [LARGE SCALE GENOMIC DNA]</scope>
    <source>
        <strain>ATCC 700278 / DSM 12444 / CCUG 56034 / CIP 105152 / NBRC 16084 / F199</strain>
    </source>
</reference>
<feature type="chain" id="PRO_0000260907" description="Large ribosomal subunit protein uL6">
    <location>
        <begin position="1"/>
        <end position="177"/>
    </location>
</feature>
<protein>
    <recommendedName>
        <fullName evidence="1">Large ribosomal subunit protein uL6</fullName>
    </recommendedName>
    <alternativeName>
        <fullName evidence="2">50S ribosomal protein L6</fullName>
    </alternativeName>
</protein>
<organism>
    <name type="scientific">Novosphingobium aromaticivorans (strain ATCC 700278 / DSM 12444 / CCUG 56034 / CIP 105152 / NBRC 16084 / F199)</name>
    <dbReference type="NCBI Taxonomy" id="279238"/>
    <lineage>
        <taxon>Bacteria</taxon>
        <taxon>Pseudomonadati</taxon>
        <taxon>Pseudomonadota</taxon>
        <taxon>Alphaproteobacteria</taxon>
        <taxon>Sphingomonadales</taxon>
        <taxon>Sphingomonadaceae</taxon>
        <taxon>Novosphingobium</taxon>
    </lineage>
</organism>
<comment type="function">
    <text evidence="1">This protein binds to the 23S rRNA, and is important in its secondary structure. It is located near the subunit interface in the base of the L7/L12 stalk, and near the tRNA binding site of the peptidyltransferase center.</text>
</comment>
<comment type="subunit">
    <text evidence="1">Part of the 50S ribosomal subunit.</text>
</comment>
<comment type="similarity">
    <text evidence="1">Belongs to the universal ribosomal protein uL6 family.</text>
</comment>
<evidence type="ECO:0000255" key="1">
    <source>
        <dbReference type="HAMAP-Rule" id="MF_01365"/>
    </source>
</evidence>
<evidence type="ECO:0000305" key="2"/>
<sequence length="177" mass="19445">MSRIGKRPVTIPSGVTANIADGVLTVKGPKGTLTLTLRDEISYTVDGDTILVKPANDTKGARAFWGMQRTLVDNLVTGVTQGYTKVLEITGVGYRANAQGKNLKLQLGYSHDVDFPVPEGIEIKTPDNTTVEISGIDKQKVGQVAAEIRRWRKPEPYKGKGIKYRGEFIFRKEGKKK</sequence>
<proteinExistence type="inferred from homology"/>